<evidence type="ECO:0000250" key="1"/>
<evidence type="ECO:0000255" key="2">
    <source>
        <dbReference type="PROSITE-ProRule" id="PRU01251"/>
    </source>
</evidence>
<evidence type="ECO:0000305" key="3"/>
<proteinExistence type="inferred from homology"/>
<organism>
    <name type="scientific">Salmonella typhi</name>
    <dbReference type="NCBI Taxonomy" id="90370"/>
    <lineage>
        <taxon>Bacteria</taxon>
        <taxon>Pseudomonadati</taxon>
        <taxon>Pseudomonadota</taxon>
        <taxon>Gammaproteobacteria</taxon>
        <taxon>Enterobacterales</taxon>
        <taxon>Enterobacteriaceae</taxon>
        <taxon>Salmonella</taxon>
    </lineage>
</organism>
<dbReference type="EMBL" id="AL513382">
    <property type="protein sequence ID" value="CAD05840.1"/>
    <property type="molecule type" value="Genomic_DNA"/>
</dbReference>
<dbReference type="EMBL" id="AE014613">
    <property type="protein sequence ID" value="AAO70187.1"/>
    <property type="molecule type" value="Genomic_DNA"/>
</dbReference>
<dbReference type="RefSeq" id="NP_457131.1">
    <property type="nucleotide sequence ID" value="NC_003198.1"/>
</dbReference>
<dbReference type="RefSeq" id="WP_001235094.1">
    <property type="nucleotide sequence ID" value="NZ_WSUR01000036.1"/>
</dbReference>
<dbReference type="SMR" id="Q7AMH5"/>
<dbReference type="STRING" id="220341.gene:17586744"/>
<dbReference type="KEGG" id="stt:t2616"/>
<dbReference type="KEGG" id="sty:STY2849"/>
<dbReference type="PATRIC" id="fig|220341.7.peg.2898"/>
<dbReference type="eggNOG" id="COG0542">
    <property type="taxonomic scope" value="Bacteria"/>
</dbReference>
<dbReference type="HOGENOM" id="CLU_005070_4_2_6"/>
<dbReference type="OMA" id="VSKMMQG"/>
<dbReference type="OrthoDB" id="9803641at2"/>
<dbReference type="Proteomes" id="UP000000541">
    <property type="component" value="Chromosome"/>
</dbReference>
<dbReference type="Proteomes" id="UP000002670">
    <property type="component" value="Chromosome"/>
</dbReference>
<dbReference type="GO" id="GO:0005737">
    <property type="term" value="C:cytoplasm"/>
    <property type="evidence" value="ECO:0007669"/>
    <property type="project" value="UniProtKB-SubCell"/>
</dbReference>
<dbReference type="GO" id="GO:0005524">
    <property type="term" value="F:ATP binding"/>
    <property type="evidence" value="ECO:0007669"/>
    <property type="project" value="UniProtKB-KW"/>
</dbReference>
<dbReference type="GO" id="GO:0016887">
    <property type="term" value="F:ATP hydrolysis activity"/>
    <property type="evidence" value="ECO:0007669"/>
    <property type="project" value="InterPro"/>
</dbReference>
<dbReference type="GO" id="GO:0034605">
    <property type="term" value="P:cellular response to heat"/>
    <property type="evidence" value="ECO:0007669"/>
    <property type="project" value="TreeGrafter"/>
</dbReference>
<dbReference type="GO" id="GO:0042026">
    <property type="term" value="P:protein refolding"/>
    <property type="evidence" value="ECO:0007669"/>
    <property type="project" value="InterPro"/>
</dbReference>
<dbReference type="CDD" id="cd00009">
    <property type="entry name" value="AAA"/>
    <property type="match status" value="1"/>
</dbReference>
<dbReference type="CDD" id="cd19499">
    <property type="entry name" value="RecA-like_ClpB_Hsp104-like"/>
    <property type="match status" value="1"/>
</dbReference>
<dbReference type="FunFam" id="1.10.1780.10:FF:000003">
    <property type="entry name" value="ATP-dependent chaperone ClpB"/>
    <property type="match status" value="1"/>
</dbReference>
<dbReference type="FunFam" id="1.10.8.60:FF:000017">
    <property type="entry name" value="ATP-dependent chaperone ClpB"/>
    <property type="match status" value="1"/>
</dbReference>
<dbReference type="FunFam" id="3.40.50.300:FF:000120">
    <property type="entry name" value="ATP-dependent chaperone ClpB"/>
    <property type="match status" value="1"/>
</dbReference>
<dbReference type="FunFam" id="3.40.50.300:FF:000025">
    <property type="entry name" value="ATP-dependent Clp protease subunit"/>
    <property type="match status" value="1"/>
</dbReference>
<dbReference type="FunFam" id="3.40.50.300:FF:000010">
    <property type="entry name" value="Chaperone clpB 1, putative"/>
    <property type="match status" value="1"/>
</dbReference>
<dbReference type="Gene3D" id="1.10.8.60">
    <property type="match status" value="1"/>
</dbReference>
<dbReference type="Gene3D" id="1.10.1780.10">
    <property type="entry name" value="Clp, N-terminal domain"/>
    <property type="match status" value="1"/>
</dbReference>
<dbReference type="Gene3D" id="3.40.50.300">
    <property type="entry name" value="P-loop containing nucleotide triphosphate hydrolases"/>
    <property type="match status" value="3"/>
</dbReference>
<dbReference type="InterPro" id="IPR003593">
    <property type="entry name" value="AAA+_ATPase"/>
</dbReference>
<dbReference type="InterPro" id="IPR003959">
    <property type="entry name" value="ATPase_AAA_core"/>
</dbReference>
<dbReference type="InterPro" id="IPR017730">
    <property type="entry name" value="Chaperonin_ClpB"/>
</dbReference>
<dbReference type="InterPro" id="IPR019489">
    <property type="entry name" value="Clp_ATPase_C"/>
</dbReference>
<dbReference type="InterPro" id="IPR036628">
    <property type="entry name" value="Clp_N_dom_sf"/>
</dbReference>
<dbReference type="InterPro" id="IPR004176">
    <property type="entry name" value="Clp_R_dom"/>
</dbReference>
<dbReference type="InterPro" id="IPR001270">
    <property type="entry name" value="ClpA/B"/>
</dbReference>
<dbReference type="InterPro" id="IPR018368">
    <property type="entry name" value="ClpA/B_CS1"/>
</dbReference>
<dbReference type="InterPro" id="IPR028299">
    <property type="entry name" value="ClpA/B_CS2"/>
</dbReference>
<dbReference type="InterPro" id="IPR041546">
    <property type="entry name" value="ClpA/ClpB_AAA_lid"/>
</dbReference>
<dbReference type="InterPro" id="IPR050130">
    <property type="entry name" value="ClpA_ClpB"/>
</dbReference>
<dbReference type="InterPro" id="IPR027417">
    <property type="entry name" value="P-loop_NTPase"/>
</dbReference>
<dbReference type="NCBIfam" id="TIGR03346">
    <property type="entry name" value="chaperone_ClpB"/>
    <property type="match status" value="1"/>
</dbReference>
<dbReference type="NCBIfam" id="NF008118">
    <property type="entry name" value="PRK10865.1"/>
    <property type="match status" value="1"/>
</dbReference>
<dbReference type="PANTHER" id="PTHR11638">
    <property type="entry name" value="ATP-DEPENDENT CLP PROTEASE"/>
    <property type="match status" value="1"/>
</dbReference>
<dbReference type="PANTHER" id="PTHR11638:SF18">
    <property type="entry name" value="HEAT SHOCK PROTEIN 104"/>
    <property type="match status" value="1"/>
</dbReference>
<dbReference type="Pfam" id="PF00004">
    <property type="entry name" value="AAA"/>
    <property type="match status" value="1"/>
</dbReference>
<dbReference type="Pfam" id="PF07724">
    <property type="entry name" value="AAA_2"/>
    <property type="match status" value="1"/>
</dbReference>
<dbReference type="Pfam" id="PF17871">
    <property type="entry name" value="AAA_lid_9"/>
    <property type="match status" value="1"/>
</dbReference>
<dbReference type="Pfam" id="PF02861">
    <property type="entry name" value="Clp_N"/>
    <property type="match status" value="2"/>
</dbReference>
<dbReference type="Pfam" id="PF10431">
    <property type="entry name" value="ClpB_D2-small"/>
    <property type="match status" value="1"/>
</dbReference>
<dbReference type="PRINTS" id="PR00300">
    <property type="entry name" value="CLPPROTEASEA"/>
</dbReference>
<dbReference type="SMART" id="SM00382">
    <property type="entry name" value="AAA"/>
    <property type="match status" value="2"/>
</dbReference>
<dbReference type="SMART" id="SM01086">
    <property type="entry name" value="ClpB_D2-small"/>
    <property type="match status" value="1"/>
</dbReference>
<dbReference type="SUPFAM" id="SSF81923">
    <property type="entry name" value="Double Clp-N motif"/>
    <property type="match status" value="1"/>
</dbReference>
<dbReference type="SUPFAM" id="SSF52540">
    <property type="entry name" value="P-loop containing nucleoside triphosphate hydrolases"/>
    <property type="match status" value="2"/>
</dbReference>
<dbReference type="PROSITE" id="PS51903">
    <property type="entry name" value="CLP_R"/>
    <property type="match status" value="1"/>
</dbReference>
<dbReference type="PROSITE" id="PS00870">
    <property type="entry name" value="CLPAB_1"/>
    <property type="match status" value="1"/>
</dbReference>
<dbReference type="PROSITE" id="PS00871">
    <property type="entry name" value="CLPAB_2"/>
    <property type="match status" value="1"/>
</dbReference>
<protein>
    <recommendedName>
        <fullName>Chaperone protein ClpB</fullName>
    </recommendedName>
</protein>
<sequence length="857" mass="95437">MRLDRLTNKFQLALADAQSLALGHDNQFIEPLHLMSALLNQEGGSIRPLLTSAGINAGQLRTAIDQALSRLPQVEGTGGDVQPSSELVRVLNLCDKLAQKRGDNFISSELFVLAALESRGTLTDLLKSAGATTANITQAIEQMRGGESVNDQGAEDQRQALKKYTVDLTERAEQGKLDPVIGRDEEIRRTIQVLQRRTKNNPVLIGEPGVGKTAIVEGLAQRIINGEVPEGLKGRRVLALDMGALVAGAKYRGEFEERLKGVLNDLAKQEGNVILFIDELHTMVGAGKADGAMDAGNMLKPALARGELHCVGATTLDEYRQYIEKDAALERRFQKVFVAEPSVEDTIAILRGLKERYELHHHVQITDPAIVAAATLSHRYIADRQLPDKAIDLIDEAASSIRMQIDSKPEELDRLDRRIIQLKLEQQALMKESDEASKKRLDMLNEELDDKERQYSELEEEWKAEKASLSGTQTIKAELEQAKIAIEQARRVGDLARMSELQYGKIPELEKQLEAATQSEGKTMRLLRNKVTDAEIAEVLARWTGIPVSRMLEGEREKLLRMEQELHSRVIGQNEAVEAVSNAIRRSRAGLSDPNRPIGSFLFLGPTGVGKTELCKALANFMFDSDDAMVRIDMSEFMEKHSVSRLVGAPPGYVGYEEGGYLTEAVRRRPYSVILLDEVEKAHPDVFNILLQVLDDGRLTDGQGRTVDFRNTVVIMTSNLGSDLIQERFGELDYGRMKEMVLGVVSQNFRPEFINRIDEVVVFHPLGEQHIASIAQIQLQRLYKRLEERGYEIHISDEALKLLSANGYDPVYGARPLKRAIQQQIENPLAQQILSGELVPGKVIRLEANDDRIVAVQ</sequence>
<reference key="1">
    <citation type="journal article" date="2001" name="Nature">
        <title>Complete genome sequence of a multiple drug resistant Salmonella enterica serovar Typhi CT18.</title>
        <authorList>
            <person name="Parkhill J."/>
            <person name="Dougan G."/>
            <person name="James K.D."/>
            <person name="Thomson N.R."/>
            <person name="Pickard D."/>
            <person name="Wain J."/>
            <person name="Churcher C.M."/>
            <person name="Mungall K.L."/>
            <person name="Bentley S.D."/>
            <person name="Holden M.T.G."/>
            <person name="Sebaihia M."/>
            <person name="Baker S."/>
            <person name="Basham D."/>
            <person name="Brooks K."/>
            <person name="Chillingworth T."/>
            <person name="Connerton P."/>
            <person name="Cronin A."/>
            <person name="Davis P."/>
            <person name="Davies R.M."/>
            <person name="Dowd L."/>
            <person name="White N."/>
            <person name="Farrar J."/>
            <person name="Feltwell T."/>
            <person name="Hamlin N."/>
            <person name="Haque A."/>
            <person name="Hien T.T."/>
            <person name="Holroyd S."/>
            <person name="Jagels K."/>
            <person name="Krogh A."/>
            <person name="Larsen T.S."/>
            <person name="Leather S."/>
            <person name="Moule S."/>
            <person name="O'Gaora P."/>
            <person name="Parry C."/>
            <person name="Quail M.A."/>
            <person name="Rutherford K.M."/>
            <person name="Simmonds M."/>
            <person name="Skelton J."/>
            <person name="Stevens K."/>
            <person name="Whitehead S."/>
            <person name="Barrell B.G."/>
        </authorList>
    </citation>
    <scope>NUCLEOTIDE SEQUENCE [LARGE SCALE GENOMIC DNA]</scope>
    <source>
        <strain>CT18</strain>
    </source>
</reference>
<reference key="2">
    <citation type="journal article" date="2003" name="J. Bacteriol.">
        <title>Comparative genomics of Salmonella enterica serovar Typhi strains Ty2 and CT18.</title>
        <authorList>
            <person name="Deng W."/>
            <person name="Liou S.-R."/>
            <person name="Plunkett G. III"/>
            <person name="Mayhew G.F."/>
            <person name="Rose D.J."/>
            <person name="Burland V."/>
            <person name="Kodoyianni V."/>
            <person name="Schwartz D.C."/>
            <person name="Blattner F.R."/>
        </authorList>
    </citation>
    <scope>NUCLEOTIDE SEQUENCE [LARGE SCALE GENOMIC DNA]</scope>
    <source>
        <strain>ATCC 700931 / Ty2</strain>
    </source>
</reference>
<name>CLPB_SALTI</name>
<gene>
    <name type="primary">clpB</name>
    <name type="ordered locus">STY2849</name>
    <name type="ordered locus">t2616</name>
</gene>
<accession>Q7AMH5</accession>
<accession>Q8XFM5</accession>
<keyword id="KW-0067">ATP-binding</keyword>
<keyword id="KW-0143">Chaperone</keyword>
<keyword id="KW-0175">Coiled coil</keyword>
<keyword id="KW-0963">Cytoplasm</keyword>
<keyword id="KW-0547">Nucleotide-binding</keyword>
<keyword id="KW-0677">Repeat</keyword>
<keyword id="KW-0346">Stress response</keyword>
<comment type="function">
    <text evidence="1">Part of a stress-induced multi-chaperone system, it is involved in the recovery of the cell from heat-induced damage, in cooperation with DnaK, DnaJ and GrpE. Acts before DnaK, in the processing of protein aggregates. Protein binding stimulates the ATPase activity; ATP hydrolysis unfolds the denatured protein aggregates, which probably helps expose new hydrophobic binding sites on the surface of ClpB-bound aggregates, contributing to the solubilization and refolding of denatured protein aggregates by DnaK (By similarity).</text>
</comment>
<comment type="subunit">
    <text evidence="1">Homohexamer. The oligomerization is ATP-dependent (By similarity).</text>
</comment>
<comment type="subcellular location">
    <subcellularLocation>
        <location evidence="3">Cytoplasm</location>
    </subcellularLocation>
</comment>
<comment type="domain">
    <text evidence="1">The Clp repeat (R) domain probably functions as a substrate-discriminating domain, recruiting aggregated proteins to the ClpB hexamer and/or stabilizing bound proteins. The NBD2 domain is responsible for oligomerization, whereas the NBD1 domain stabilizes the hexamer probably in an ATP-dependent manner. The movement of the coiled-coil domain is essential for ClpB ability to rescue proteins from an aggregated state, probably by pulling apart large aggregated proteins, which are bound between the coiled-coils motifs of adjacent ClpB subunits in the functional hexamer (By similarity).</text>
</comment>
<comment type="similarity">
    <text evidence="3">Belongs to the ClpA/ClpB family.</text>
</comment>
<feature type="chain" id="PRO_0000191171" description="Chaperone protein ClpB">
    <location>
        <begin position="1"/>
        <end position="857"/>
    </location>
</feature>
<feature type="domain" description="Clp R" evidence="2">
    <location>
        <begin position="3"/>
        <end position="146"/>
    </location>
</feature>
<feature type="region of interest" description="Repeat 1" evidence="2">
    <location>
        <begin position="6"/>
        <end position="71"/>
    </location>
</feature>
<feature type="region of interest" description="Repeat 2" evidence="2">
    <location>
        <begin position="83"/>
        <end position="146"/>
    </location>
</feature>
<feature type="region of interest" description="NBD1" evidence="1">
    <location>
        <begin position="159"/>
        <end position="340"/>
    </location>
</feature>
<feature type="region of interest" description="Linker" evidence="1">
    <location>
        <begin position="341"/>
        <end position="545"/>
    </location>
</feature>
<feature type="region of interest" description="NBD2" evidence="1">
    <location>
        <begin position="555"/>
        <end position="765"/>
    </location>
</feature>
<feature type="region of interest" description="C-terminal" evidence="1">
    <location>
        <begin position="766"/>
        <end position="857"/>
    </location>
</feature>
<feature type="coiled-coil region" evidence="1">
    <location>
        <begin position="391"/>
        <end position="525"/>
    </location>
</feature>
<feature type="binding site" evidence="1">
    <location>
        <begin position="206"/>
        <end position="213"/>
    </location>
    <ligand>
        <name>ATP</name>
        <dbReference type="ChEBI" id="CHEBI:30616"/>
        <label>1</label>
    </ligand>
</feature>
<feature type="binding site" evidence="1">
    <location>
        <begin position="605"/>
        <end position="612"/>
    </location>
    <ligand>
        <name>ATP</name>
        <dbReference type="ChEBI" id="CHEBI:30616"/>
        <label>2</label>
    </ligand>
</feature>